<sequence>MLHATVLPILLWLATLAYGFDRKEFLVDGNELPGFTKLKNTKHWTVPKMYAGHLPATRDNDTQYFFWKFENKKTKKNDETPLIIWLNGGPGCSSMAGALMEIGPFRLNKKAEVIKNDGSWHMRGSVLFLDQPVGTGFSYSKEDNEVSELDEVADNFMVFLQNYYATFPDDKDRELILAGESYAGQFIPYFTKAIIKFNEQQRDENSKINIKVMFIGNGWLDPKRQYLSYVPFSLEKGIIKKEDPAFKDILKQHETCQNYINSDHTGHSELSYPPCEAVLGKIISQDKTQCINVYKFDEYDSYPSCGLEWPVDTKFTKQFLTDKKVLAALHANDERSWIECRPDVKLENIKAKPAIELIPSLLESGIELILFNGNKDLICNTLGIDNVLKHLQWEGETGFTDEVQIFDWVYRDDLKSDKEKVAGTVKYERQLTLITIEDGSHMVSYDKALISRGILDMYYDDVLLVHRDGKDTLISSKDGDIDGYLEDDKSQDENKDNESEDESEDENDSDDESDGKEGDKQENKPDDSDDESDEEDDDEDEDDEDDDDDDDDDDGDDEDKKGDQNSHPSHGDMNGGLDNDLETGGEYYQDEDEEGSNFKAFFLILSLVSAFIIVAAFYISDYIKSRRHPILVDGDGRSRLNKSVTWASDIENGSFDIEDDDPEFGTEGMEDNMELEDVFSIDEEDEEQLEGVVPESTRKSKKGSKKKGKYFSVPNDDSAEDIELQDIERH</sequence>
<name>KEX1_CANGA</name>
<accession>Q6FTM9</accession>
<gene>
    <name type="primary">KEX1</name>
    <name type="ordered locus">CAGL0G01232g</name>
</gene>
<keyword id="KW-0053">Apoptosis</keyword>
<keyword id="KW-0121">Carboxypeptidase</keyword>
<keyword id="KW-0325">Glycoprotein</keyword>
<keyword id="KW-0333">Golgi apparatus</keyword>
<keyword id="KW-0378">Hydrolase</keyword>
<keyword id="KW-0472">Membrane</keyword>
<keyword id="KW-0645">Protease</keyword>
<keyword id="KW-1185">Reference proteome</keyword>
<keyword id="KW-0732">Signal</keyword>
<keyword id="KW-0812">Transmembrane</keyword>
<keyword id="KW-1133">Transmembrane helix</keyword>
<organism>
    <name type="scientific">Candida glabrata (strain ATCC 2001 / BCRC 20586 / JCM 3761 / NBRC 0622 / NRRL Y-65 / CBS 138)</name>
    <name type="common">Yeast</name>
    <name type="synonym">Nakaseomyces glabratus</name>
    <dbReference type="NCBI Taxonomy" id="284593"/>
    <lineage>
        <taxon>Eukaryota</taxon>
        <taxon>Fungi</taxon>
        <taxon>Dikarya</taxon>
        <taxon>Ascomycota</taxon>
        <taxon>Saccharomycotina</taxon>
        <taxon>Saccharomycetes</taxon>
        <taxon>Saccharomycetales</taxon>
        <taxon>Saccharomycetaceae</taxon>
        <taxon>Nakaseomyces</taxon>
    </lineage>
</organism>
<reference key="1">
    <citation type="journal article" date="2004" name="Nature">
        <title>Genome evolution in yeasts.</title>
        <authorList>
            <person name="Dujon B."/>
            <person name="Sherman D."/>
            <person name="Fischer G."/>
            <person name="Durrens P."/>
            <person name="Casaregola S."/>
            <person name="Lafontaine I."/>
            <person name="de Montigny J."/>
            <person name="Marck C."/>
            <person name="Neuveglise C."/>
            <person name="Talla E."/>
            <person name="Goffard N."/>
            <person name="Frangeul L."/>
            <person name="Aigle M."/>
            <person name="Anthouard V."/>
            <person name="Babour A."/>
            <person name="Barbe V."/>
            <person name="Barnay S."/>
            <person name="Blanchin S."/>
            <person name="Beckerich J.-M."/>
            <person name="Beyne E."/>
            <person name="Bleykasten C."/>
            <person name="Boisrame A."/>
            <person name="Boyer J."/>
            <person name="Cattolico L."/>
            <person name="Confanioleri F."/>
            <person name="de Daruvar A."/>
            <person name="Despons L."/>
            <person name="Fabre E."/>
            <person name="Fairhead C."/>
            <person name="Ferry-Dumazet H."/>
            <person name="Groppi A."/>
            <person name="Hantraye F."/>
            <person name="Hennequin C."/>
            <person name="Jauniaux N."/>
            <person name="Joyet P."/>
            <person name="Kachouri R."/>
            <person name="Kerrest A."/>
            <person name="Koszul R."/>
            <person name="Lemaire M."/>
            <person name="Lesur I."/>
            <person name="Ma L."/>
            <person name="Muller H."/>
            <person name="Nicaud J.-M."/>
            <person name="Nikolski M."/>
            <person name="Oztas S."/>
            <person name="Ozier-Kalogeropoulos O."/>
            <person name="Pellenz S."/>
            <person name="Potier S."/>
            <person name="Richard G.-F."/>
            <person name="Straub M.-L."/>
            <person name="Suleau A."/>
            <person name="Swennen D."/>
            <person name="Tekaia F."/>
            <person name="Wesolowski-Louvel M."/>
            <person name="Westhof E."/>
            <person name="Wirth B."/>
            <person name="Zeniou-Meyer M."/>
            <person name="Zivanovic Y."/>
            <person name="Bolotin-Fukuhara M."/>
            <person name="Thierry A."/>
            <person name="Bouchier C."/>
            <person name="Caudron B."/>
            <person name="Scarpelli C."/>
            <person name="Gaillardin C."/>
            <person name="Weissenbach J."/>
            <person name="Wincker P."/>
            <person name="Souciet J.-L."/>
        </authorList>
    </citation>
    <scope>NUCLEOTIDE SEQUENCE [LARGE SCALE GENOMIC DNA]</scope>
    <source>
        <strain>ATCC 2001 / BCRC 20586 / JCM 3761 / NBRC 0622 / NRRL Y-65 / CBS 138</strain>
    </source>
</reference>
<comment type="function">
    <text evidence="1">Protease with a carboxypeptidase B-like function involved in the C-terminal processing of the lysine and arginine residues from protein precursors. Promotes cell fusion and is involved in the programmed cell death (By similarity).</text>
</comment>
<comment type="catalytic activity">
    <reaction>
        <text>Preferential release of a C-terminal arginine or lysine residue.</text>
        <dbReference type="EC" id="3.4.16.6"/>
    </reaction>
</comment>
<comment type="subcellular location">
    <subcellularLocation>
        <location evidence="1">Golgi apparatus</location>
        <location evidence="1">trans-Golgi network membrane</location>
        <topology evidence="1">Single-pass type I membrane protein</topology>
    </subcellularLocation>
</comment>
<comment type="similarity">
    <text evidence="5">Belongs to the peptidase S10 family.</text>
</comment>
<dbReference type="EC" id="3.4.16.6"/>
<dbReference type="EMBL" id="CR380953">
    <property type="protein sequence ID" value="CAG59342.1"/>
    <property type="molecule type" value="Genomic_DNA"/>
</dbReference>
<dbReference type="RefSeq" id="XP_446415.1">
    <property type="nucleotide sequence ID" value="XM_446415.1"/>
</dbReference>
<dbReference type="SMR" id="Q6FTM9"/>
<dbReference type="FunCoup" id="Q6FTM9">
    <property type="interactions" value="133"/>
</dbReference>
<dbReference type="STRING" id="284593.Q6FTM9"/>
<dbReference type="ESTHER" id="canga-q6ftm9">
    <property type="family name" value="Carboxypeptidase_S10"/>
</dbReference>
<dbReference type="MEROPS" id="S10.007"/>
<dbReference type="GlyCosmos" id="Q6FTM9">
    <property type="glycosylation" value="3 sites, No reported glycans"/>
</dbReference>
<dbReference type="EnsemblFungi" id="CAGL0G01232g-T">
    <property type="protein sequence ID" value="CAGL0G01232g-T-p1"/>
    <property type="gene ID" value="CAGL0G01232g"/>
</dbReference>
<dbReference type="KEGG" id="cgr:2888423"/>
<dbReference type="CGD" id="CAL0130288">
    <property type="gene designation" value="CAGL0G01232g"/>
</dbReference>
<dbReference type="VEuPathDB" id="FungiDB:CAGL0G01232g"/>
<dbReference type="eggNOG" id="KOG1282">
    <property type="taxonomic scope" value="Eukaryota"/>
</dbReference>
<dbReference type="HOGENOM" id="CLU_008523_11_2_1"/>
<dbReference type="InParanoid" id="Q6FTM9"/>
<dbReference type="Proteomes" id="UP000002428">
    <property type="component" value="Chromosome G"/>
</dbReference>
<dbReference type="GO" id="GO:0016020">
    <property type="term" value="C:membrane"/>
    <property type="evidence" value="ECO:0007669"/>
    <property type="project" value="UniProtKB-KW"/>
</dbReference>
<dbReference type="GO" id="GO:0005802">
    <property type="term" value="C:trans-Golgi network"/>
    <property type="evidence" value="ECO:0007669"/>
    <property type="project" value="EnsemblFungi"/>
</dbReference>
<dbReference type="GO" id="GO:0004185">
    <property type="term" value="F:serine-type carboxypeptidase activity"/>
    <property type="evidence" value="ECO:0007669"/>
    <property type="project" value="UniProtKB-EC"/>
</dbReference>
<dbReference type="GO" id="GO:0006915">
    <property type="term" value="P:apoptotic process"/>
    <property type="evidence" value="ECO:0007669"/>
    <property type="project" value="UniProtKB-KW"/>
</dbReference>
<dbReference type="GO" id="GO:0006508">
    <property type="term" value="P:proteolysis"/>
    <property type="evidence" value="ECO:0007669"/>
    <property type="project" value="UniProtKB-KW"/>
</dbReference>
<dbReference type="Gene3D" id="3.40.50.1820">
    <property type="entry name" value="alpha/beta hydrolase"/>
    <property type="match status" value="1"/>
</dbReference>
<dbReference type="InterPro" id="IPR029058">
    <property type="entry name" value="AB_hydrolase_fold"/>
</dbReference>
<dbReference type="InterPro" id="IPR001563">
    <property type="entry name" value="Peptidase_S10"/>
</dbReference>
<dbReference type="InterPro" id="IPR018202">
    <property type="entry name" value="Ser_caboxypep_ser_AS"/>
</dbReference>
<dbReference type="PANTHER" id="PTHR11802:SF190">
    <property type="entry name" value="PHEROMONE-PROCESSING CARBOXYPEPTIDASE KEX1"/>
    <property type="match status" value="1"/>
</dbReference>
<dbReference type="PANTHER" id="PTHR11802">
    <property type="entry name" value="SERINE PROTEASE FAMILY S10 SERINE CARBOXYPEPTIDASE"/>
    <property type="match status" value="1"/>
</dbReference>
<dbReference type="Pfam" id="PF00450">
    <property type="entry name" value="Peptidase_S10"/>
    <property type="match status" value="1"/>
</dbReference>
<dbReference type="PRINTS" id="PR00724">
    <property type="entry name" value="CRBOXYPTASEC"/>
</dbReference>
<dbReference type="SUPFAM" id="SSF53474">
    <property type="entry name" value="alpha/beta-Hydrolases"/>
    <property type="match status" value="1"/>
</dbReference>
<dbReference type="PROSITE" id="PS00131">
    <property type="entry name" value="CARBOXYPEPT_SER_SER"/>
    <property type="match status" value="1"/>
</dbReference>
<evidence type="ECO:0000250" key="1"/>
<evidence type="ECO:0000255" key="2"/>
<evidence type="ECO:0000255" key="3">
    <source>
        <dbReference type="PROSITE-ProRule" id="PRU10074"/>
    </source>
</evidence>
<evidence type="ECO:0000256" key="4">
    <source>
        <dbReference type="SAM" id="MobiDB-lite"/>
    </source>
</evidence>
<evidence type="ECO:0000305" key="5"/>
<feature type="signal peptide" evidence="2">
    <location>
        <begin position="1"/>
        <end position="19"/>
    </location>
</feature>
<feature type="chain" id="PRO_0000411910" description="Pheromone-processing carboxypeptidase KEX1">
    <location>
        <begin position="20"/>
        <end position="730"/>
    </location>
</feature>
<feature type="topological domain" description="Lumenal" evidence="2">
    <location>
        <begin position="20"/>
        <end position="599"/>
    </location>
</feature>
<feature type="transmembrane region" description="Helical" evidence="2">
    <location>
        <begin position="600"/>
        <end position="620"/>
    </location>
</feature>
<feature type="topological domain" description="Cytoplasmic" evidence="2">
    <location>
        <begin position="621"/>
        <end position="730"/>
    </location>
</feature>
<feature type="region of interest" description="Disordered" evidence="4">
    <location>
        <begin position="475"/>
        <end position="590"/>
    </location>
</feature>
<feature type="region of interest" description="Disordered" evidence="4">
    <location>
        <begin position="684"/>
        <end position="730"/>
    </location>
</feature>
<feature type="compositionally biased region" description="Basic and acidic residues" evidence="4">
    <location>
        <begin position="486"/>
        <end position="497"/>
    </location>
</feature>
<feature type="compositionally biased region" description="Acidic residues" evidence="4">
    <location>
        <begin position="498"/>
        <end position="514"/>
    </location>
</feature>
<feature type="compositionally biased region" description="Basic and acidic residues" evidence="4">
    <location>
        <begin position="515"/>
        <end position="526"/>
    </location>
</feature>
<feature type="compositionally biased region" description="Acidic residues" evidence="4">
    <location>
        <begin position="527"/>
        <end position="557"/>
    </location>
</feature>
<feature type="compositionally biased region" description="Acidic residues" evidence="4">
    <location>
        <begin position="579"/>
        <end position="590"/>
    </location>
</feature>
<feature type="compositionally biased region" description="Basic residues" evidence="4">
    <location>
        <begin position="699"/>
        <end position="709"/>
    </location>
</feature>
<feature type="compositionally biased region" description="Acidic residues" evidence="4">
    <location>
        <begin position="717"/>
        <end position="730"/>
    </location>
</feature>
<feature type="active site" evidence="3">
    <location>
        <position position="181"/>
    </location>
</feature>
<feature type="active site" evidence="3">
    <location>
        <position position="376"/>
    </location>
</feature>
<feature type="active site" evidence="3">
    <location>
        <position position="441"/>
    </location>
</feature>
<feature type="glycosylation site" description="N-linked (GlcNAc...) asparagine" evidence="2">
    <location>
        <position position="60"/>
    </location>
</feature>
<feature type="glycosylation site" description="N-linked (GlcNAc...) asparagine" evidence="2">
    <location>
        <position position="497"/>
    </location>
</feature>
<feature type="glycosylation site" description="N-linked (GlcNAc...) asparagine" evidence="2">
    <location>
        <position position="507"/>
    </location>
</feature>
<protein>
    <recommendedName>
        <fullName>Pheromone-processing carboxypeptidase KEX1</fullName>
        <ecNumber>3.4.16.6</ecNumber>
    </recommendedName>
    <alternativeName>
        <fullName>Carboxypeptidase D</fullName>
    </alternativeName>
</protein>
<proteinExistence type="inferred from homology"/>